<proteinExistence type="inferred from homology"/>
<name>TUSB_ECOL5</name>
<feature type="chain" id="PRO_1000069055" description="Protein TusB">
    <location>
        <begin position="1"/>
        <end position="95"/>
    </location>
</feature>
<reference key="1">
    <citation type="journal article" date="2006" name="Mol. Microbiol.">
        <title>Role of pathogenicity island-associated integrases in the genome plasticity of uropathogenic Escherichia coli strain 536.</title>
        <authorList>
            <person name="Hochhut B."/>
            <person name="Wilde C."/>
            <person name="Balling G."/>
            <person name="Middendorf B."/>
            <person name="Dobrindt U."/>
            <person name="Brzuszkiewicz E."/>
            <person name="Gottschalk G."/>
            <person name="Carniel E."/>
            <person name="Hacker J."/>
        </authorList>
    </citation>
    <scope>NUCLEOTIDE SEQUENCE [LARGE SCALE GENOMIC DNA]</scope>
    <source>
        <strain>536 / UPEC</strain>
    </source>
</reference>
<gene>
    <name evidence="1" type="primary">tusB</name>
    <name type="ordered locus">ECP_3433</name>
</gene>
<keyword id="KW-0963">Cytoplasm</keyword>
<keyword id="KW-0819">tRNA processing</keyword>
<comment type="function">
    <text evidence="1">Part of a sulfur-relay system required for 2-thiolation of 5-methylaminomethyl-2-thiouridine (mnm(5)s(2)U) at tRNA wobble positions.</text>
</comment>
<comment type="subunit">
    <text evidence="1">Heterohexamer, formed by a dimer of trimers. The hexameric TusBCD complex contains 2 copies each of TusB, TusC and TusD. The TusBCD complex interacts with TusE.</text>
</comment>
<comment type="subcellular location">
    <subcellularLocation>
        <location evidence="1">Cytoplasm</location>
    </subcellularLocation>
</comment>
<comment type="similarity">
    <text evidence="1">Belongs to the DsrH/TusB family.</text>
</comment>
<dbReference type="EMBL" id="CP000247">
    <property type="protein sequence ID" value="ABG71413.1"/>
    <property type="molecule type" value="Genomic_DNA"/>
</dbReference>
<dbReference type="RefSeq" id="WP_000903382.1">
    <property type="nucleotide sequence ID" value="NC_008253.1"/>
</dbReference>
<dbReference type="SMR" id="Q0TCB6"/>
<dbReference type="KEGG" id="ecp:ECP_3433"/>
<dbReference type="HOGENOM" id="CLU_166087_2_1_6"/>
<dbReference type="Proteomes" id="UP000009182">
    <property type="component" value="Chromosome"/>
</dbReference>
<dbReference type="GO" id="GO:1990228">
    <property type="term" value="C:sulfurtransferase complex"/>
    <property type="evidence" value="ECO:0007669"/>
    <property type="project" value="TreeGrafter"/>
</dbReference>
<dbReference type="GO" id="GO:0002143">
    <property type="term" value="P:tRNA wobble position uridine thiolation"/>
    <property type="evidence" value="ECO:0007669"/>
    <property type="project" value="InterPro"/>
</dbReference>
<dbReference type="FunFam" id="3.40.1260.10:FF:000002">
    <property type="entry name" value="Sulfurtransferase TusB"/>
    <property type="match status" value="1"/>
</dbReference>
<dbReference type="Gene3D" id="3.40.1260.10">
    <property type="entry name" value="DsrEFH-like"/>
    <property type="match status" value="1"/>
</dbReference>
<dbReference type="HAMAP" id="MF_01564">
    <property type="entry name" value="Thiourid_synth_B"/>
    <property type="match status" value="1"/>
</dbReference>
<dbReference type="InterPro" id="IPR027396">
    <property type="entry name" value="DsrEFH-like"/>
</dbReference>
<dbReference type="InterPro" id="IPR023526">
    <property type="entry name" value="Sulphur_relay_TusB"/>
</dbReference>
<dbReference type="InterPro" id="IPR007215">
    <property type="entry name" value="Sulphur_relay_TusB/DsrH"/>
</dbReference>
<dbReference type="NCBIfam" id="NF010035">
    <property type="entry name" value="PRK13510.1"/>
    <property type="match status" value="1"/>
</dbReference>
<dbReference type="NCBIfam" id="TIGR03011">
    <property type="entry name" value="sulf_tusB_dsrH"/>
    <property type="match status" value="1"/>
</dbReference>
<dbReference type="PANTHER" id="PTHR37526">
    <property type="entry name" value="PROTEIN TUSB"/>
    <property type="match status" value="1"/>
</dbReference>
<dbReference type="PANTHER" id="PTHR37526:SF1">
    <property type="entry name" value="PROTEIN TUSB"/>
    <property type="match status" value="1"/>
</dbReference>
<dbReference type="Pfam" id="PF04077">
    <property type="entry name" value="DsrH"/>
    <property type="match status" value="1"/>
</dbReference>
<dbReference type="SUPFAM" id="SSF75169">
    <property type="entry name" value="DsrEFH-like"/>
    <property type="match status" value="1"/>
</dbReference>
<protein>
    <recommendedName>
        <fullName evidence="1">Protein TusB</fullName>
    </recommendedName>
    <alternativeName>
        <fullName evidence="1">tRNA 2-thiouridine synthesizing protein B</fullName>
    </alternativeName>
</protein>
<organism>
    <name type="scientific">Escherichia coli O6:K15:H31 (strain 536 / UPEC)</name>
    <dbReference type="NCBI Taxonomy" id="362663"/>
    <lineage>
        <taxon>Bacteria</taxon>
        <taxon>Pseudomonadati</taxon>
        <taxon>Pseudomonadota</taxon>
        <taxon>Gammaproteobacteria</taxon>
        <taxon>Enterobacterales</taxon>
        <taxon>Enterobacteriaceae</taxon>
        <taxon>Escherichia</taxon>
    </lineage>
</organism>
<evidence type="ECO:0000255" key="1">
    <source>
        <dbReference type="HAMAP-Rule" id="MF_01564"/>
    </source>
</evidence>
<sequence length="95" mass="10710">MLHTLHRSPWLTDFAALLRLLSEGDELLLLQDGVTAAVDGNRYLESLRNAPIKVYALNEDLIARGLTGRISNDIISIDYTDFVRLTVKHSSQMAW</sequence>
<accession>Q0TCB6</accession>